<reference key="1">
    <citation type="journal article" date="2006" name="Proc. Natl. Acad. Sci. U.S.A.">
        <title>Genome reduction in Leptospira borgpetersenii reflects limited transmission potential.</title>
        <authorList>
            <person name="Bulach D.M."/>
            <person name="Zuerner R.L."/>
            <person name="Wilson P."/>
            <person name="Seemann T."/>
            <person name="McGrath A."/>
            <person name="Cullen P.A."/>
            <person name="Davis J."/>
            <person name="Johnson M."/>
            <person name="Kuczek E."/>
            <person name="Alt D.P."/>
            <person name="Peterson-Burch B."/>
            <person name="Coppel R.L."/>
            <person name="Rood J.I."/>
            <person name="Davies J.K."/>
            <person name="Adler B."/>
        </authorList>
    </citation>
    <scope>NUCLEOTIDE SEQUENCE [LARGE SCALE GENOMIC DNA]</scope>
    <source>
        <strain>JB197</strain>
    </source>
</reference>
<comment type="function">
    <text evidence="1">Nucleotide-binding protein.</text>
</comment>
<comment type="similarity">
    <text evidence="1">Belongs to the YajQ family.</text>
</comment>
<evidence type="ECO:0000255" key="1">
    <source>
        <dbReference type="HAMAP-Rule" id="MF_00632"/>
    </source>
</evidence>
<sequence>MSDPSFDVVSEISRPELTNAVTQALGEIKNRFDFKGSKSDIQLEDEQLVLVSDNEAKLESVIDVLVSKMAKRGLGLKNFDFKSKVEPATGGTVRMKVKIRKGMEKEQTKEVTRIIKESKLKVNVTIMGESVRVTGKKKDDLQEVIHLLKNADFPFDVQFTNYK</sequence>
<accession>Q04QG7</accession>
<name>Y2391_LEPBJ</name>
<dbReference type="EMBL" id="CP000350">
    <property type="protein sequence ID" value="ABJ76853.1"/>
    <property type="molecule type" value="Genomic_DNA"/>
</dbReference>
<dbReference type="RefSeq" id="WP_002722105.1">
    <property type="nucleotide sequence ID" value="NC_008510.1"/>
</dbReference>
<dbReference type="SMR" id="Q04QG7"/>
<dbReference type="KEGG" id="lbj:LBJ_2391"/>
<dbReference type="HOGENOM" id="CLU_099839_1_0_12"/>
<dbReference type="Proteomes" id="UP000000656">
    <property type="component" value="Chromosome 1"/>
</dbReference>
<dbReference type="GO" id="GO:0005829">
    <property type="term" value="C:cytosol"/>
    <property type="evidence" value="ECO:0007669"/>
    <property type="project" value="TreeGrafter"/>
</dbReference>
<dbReference type="GO" id="GO:0000166">
    <property type="term" value="F:nucleotide binding"/>
    <property type="evidence" value="ECO:0007669"/>
    <property type="project" value="TreeGrafter"/>
</dbReference>
<dbReference type="CDD" id="cd11740">
    <property type="entry name" value="YajQ_like"/>
    <property type="match status" value="1"/>
</dbReference>
<dbReference type="FunFam" id="3.30.70.990:FF:000002">
    <property type="entry name" value="UPF0234 protein LEP1GSC067_4943"/>
    <property type="match status" value="1"/>
</dbReference>
<dbReference type="Gene3D" id="3.30.70.860">
    <property type="match status" value="1"/>
</dbReference>
<dbReference type="Gene3D" id="3.30.70.990">
    <property type="entry name" value="YajQ-like, domain 2"/>
    <property type="match status" value="1"/>
</dbReference>
<dbReference type="HAMAP" id="MF_00632">
    <property type="entry name" value="YajQ"/>
    <property type="match status" value="1"/>
</dbReference>
<dbReference type="InterPro" id="IPR007551">
    <property type="entry name" value="DUF520"/>
</dbReference>
<dbReference type="InterPro" id="IPR035571">
    <property type="entry name" value="UPF0234-like_C"/>
</dbReference>
<dbReference type="InterPro" id="IPR035570">
    <property type="entry name" value="UPF0234_N"/>
</dbReference>
<dbReference type="InterPro" id="IPR036183">
    <property type="entry name" value="YajQ-like_sf"/>
</dbReference>
<dbReference type="NCBIfam" id="NF003819">
    <property type="entry name" value="PRK05412.1"/>
    <property type="match status" value="1"/>
</dbReference>
<dbReference type="PANTHER" id="PTHR30476">
    <property type="entry name" value="UPF0234 PROTEIN YAJQ"/>
    <property type="match status" value="1"/>
</dbReference>
<dbReference type="PANTHER" id="PTHR30476:SF0">
    <property type="entry name" value="UPF0234 PROTEIN YAJQ"/>
    <property type="match status" value="1"/>
</dbReference>
<dbReference type="Pfam" id="PF04461">
    <property type="entry name" value="DUF520"/>
    <property type="match status" value="1"/>
</dbReference>
<dbReference type="SUPFAM" id="SSF89963">
    <property type="entry name" value="YajQ-like"/>
    <property type="match status" value="2"/>
</dbReference>
<organism>
    <name type="scientific">Leptospira borgpetersenii serovar Hardjo-bovis (strain JB197)</name>
    <dbReference type="NCBI Taxonomy" id="355277"/>
    <lineage>
        <taxon>Bacteria</taxon>
        <taxon>Pseudomonadati</taxon>
        <taxon>Spirochaetota</taxon>
        <taxon>Spirochaetia</taxon>
        <taxon>Leptospirales</taxon>
        <taxon>Leptospiraceae</taxon>
        <taxon>Leptospira</taxon>
    </lineage>
</organism>
<gene>
    <name type="ordered locus">LBJ_2391</name>
</gene>
<feature type="chain" id="PRO_1000051735" description="Nucleotide-binding protein LBJ_2391">
    <location>
        <begin position="1"/>
        <end position="163"/>
    </location>
</feature>
<protein>
    <recommendedName>
        <fullName evidence="1">Nucleotide-binding protein LBJ_2391</fullName>
    </recommendedName>
</protein>
<proteinExistence type="inferred from homology"/>
<keyword id="KW-0547">Nucleotide-binding</keyword>